<sequence>MEPPNLYPVKLYVYDLSKGLARRLSPIMLGKQLEGIWHTSIVVHKDEFFFGSGGISSCPPGGTLLGPPDSVVDVGSTEVTEEIFLEYLSSLGESLFRGEAYNLFEHNCNTFSNEVAQFLTGRKIPSYITDLPSEVLSTPFGQALRPLLDSIQIQPPGGSSVGRPNGQS</sequence>
<dbReference type="EC" id="3.4.-.-" evidence="1"/>
<dbReference type="EC" id="3.1.2.22" evidence="4"/>
<dbReference type="EMBL" id="CR456458">
    <property type="protein sequence ID" value="CAG30344.1"/>
    <property type="molecule type" value="mRNA"/>
</dbReference>
<dbReference type="EMBL" id="Z83840">
    <property type="status" value="NOT_ANNOTATED_CDS"/>
    <property type="molecule type" value="Genomic_DNA"/>
</dbReference>
<dbReference type="EMBL" id="AL023553">
    <property type="status" value="NOT_ANNOTATED_CDS"/>
    <property type="molecule type" value="Genomic_DNA"/>
</dbReference>
<dbReference type="EMBL" id="CH471095">
    <property type="protein sequence ID" value="EAW60445.1"/>
    <property type="molecule type" value="Genomic_DNA"/>
</dbReference>
<dbReference type="EMBL" id="BC093956">
    <property type="protein sequence ID" value="AAH93956.1"/>
    <property type="molecule type" value="mRNA"/>
</dbReference>
<dbReference type="EMBL" id="BC112179">
    <property type="protein sequence ID" value="AAI12180.1"/>
    <property type="molecule type" value="mRNA"/>
</dbReference>
<dbReference type="CCDS" id="CCDS33652.1"/>
<dbReference type="RefSeq" id="NP_056519.1">
    <property type="nucleotide sequence ID" value="NM_015704.3"/>
</dbReference>
<dbReference type="PDB" id="3EBQ">
    <property type="method" value="X-ray"/>
    <property type="resolution" value="1.90 A"/>
    <property type="chains" value="A=1-168"/>
</dbReference>
<dbReference type="PDBsum" id="3EBQ"/>
<dbReference type="SMR" id="Q6ICB0"/>
<dbReference type="BioGRID" id="118163">
    <property type="interactions" value="66"/>
</dbReference>
<dbReference type="FunCoup" id="Q6ICB0">
    <property type="interactions" value="147"/>
</dbReference>
<dbReference type="IntAct" id="Q6ICB0">
    <property type="interactions" value="40"/>
</dbReference>
<dbReference type="STRING" id="9606.ENSP00000263256"/>
<dbReference type="MEROPS" id="C97.001"/>
<dbReference type="iPTMnet" id="Q6ICB0"/>
<dbReference type="PhosphoSitePlus" id="Q6ICB0"/>
<dbReference type="SwissPalm" id="Q6ICB0"/>
<dbReference type="BioMuta" id="DESI1"/>
<dbReference type="DMDM" id="74757716"/>
<dbReference type="jPOST" id="Q6ICB0"/>
<dbReference type="MassIVE" id="Q6ICB0"/>
<dbReference type="PaxDb" id="9606-ENSP00000263256"/>
<dbReference type="PeptideAtlas" id="Q6ICB0"/>
<dbReference type="ProteomicsDB" id="66382"/>
<dbReference type="Pumba" id="Q6ICB0"/>
<dbReference type="TopDownProteomics" id="Q6ICB0"/>
<dbReference type="Antibodypedia" id="55491">
    <property type="antibodies" value="31 antibodies from 12 providers"/>
</dbReference>
<dbReference type="DNASU" id="27351"/>
<dbReference type="Ensembl" id="ENST00000263256.7">
    <property type="protein sequence ID" value="ENSP00000263256.6"/>
    <property type="gene ID" value="ENSG00000100418.8"/>
</dbReference>
<dbReference type="GeneID" id="27351"/>
<dbReference type="KEGG" id="hsa:27351"/>
<dbReference type="MANE-Select" id="ENST00000263256.7">
    <property type="protein sequence ID" value="ENSP00000263256.6"/>
    <property type="RefSeq nucleotide sequence ID" value="NM_015704.3"/>
    <property type="RefSeq protein sequence ID" value="NP_056519.1"/>
</dbReference>
<dbReference type="UCSC" id="uc003bam.3">
    <property type="organism name" value="human"/>
</dbReference>
<dbReference type="AGR" id="HGNC:24577"/>
<dbReference type="CTD" id="27351"/>
<dbReference type="DisGeNET" id="27351"/>
<dbReference type="GeneCards" id="DESI1"/>
<dbReference type="HGNC" id="HGNC:24577">
    <property type="gene designation" value="DESI1"/>
</dbReference>
<dbReference type="HPA" id="ENSG00000100418">
    <property type="expression patterns" value="Low tissue specificity"/>
</dbReference>
<dbReference type="MIM" id="614637">
    <property type="type" value="gene"/>
</dbReference>
<dbReference type="neXtProt" id="NX_Q6ICB0"/>
<dbReference type="OpenTargets" id="ENSG00000100418"/>
<dbReference type="PharmGKB" id="PA164725008"/>
<dbReference type="VEuPathDB" id="HostDB:ENSG00000100418"/>
<dbReference type="eggNOG" id="KOG0324">
    <property type="taxonomic scope" value="Eukaryota"/>
</dbReference>
<dbReference type="GeneTree" id="ENSGT00730000111100"/>
<dbReference type="HOGENOM" id="CLU_101028_0_0_1"/>
<dbReference type="InParanoid" id="Q6ICB0"/>
<dbReference type="OMA" id="HLMLGKQ"/>
<dbReference type="OrthoDB" id="21221at2759"/>
<dbReference type="PAN-GO" id="Q6ICB0">
    <property type="GO annotations" value="1 GO annotation based on evolutionary models"/>
</dbReference>
<dbReference type="PhylomeDB" id="Q6ICB0"/>
<dbReference type="TreeFam" id="TF328492"/>
<dbReference type="PathwayCommons" id="Q6ICB0"/>
<dbReference type="SignaLink" id="Q6ICB0"/>
<dbReference type="BioGRID-ORCS" id="27351">
    <property type="hits" value="36 hits in 1158 CRISPR screens"/>
</dbReference>
<dbReference type="ChiTaRS" id="DESI1">
    <property type="organism name" value="human"/>
</dbReference>
<dbReference type="EvolutionaryTrace" id="Q6ICB0"/>
<dbReference type="GenomeRNAi" id="27351"/>
<dbReference type="Pharos" id="Q6ICB0">
    <property type="development level" value="Tdark"/>
</dbReference>
<dbReference type="PRO" id="PR:Q6ICB0"/>
<dbReference type="Proteomes" id="UP000005640">
    <property type="component" value="Chromosome 22"/>
</dbReference>
<dbReference type="RNAct" id="Q6ICB0">
    <property type="molecule type" value="protein"/>
</dbReference>
<dbReference type="Bgee" id="ENSG00000100418">
    <property type="expression patterns" value="Expressed in lower esophagus mucosa and 188 other cell types or tissues"/>
</dbReference>
<dbReference type="GO" id="GO:0005829">
    <property type="term" value="C:cytosol"/>
    <property type="evidence" value="ECO:0000314"/>
    <property type="project" value="UniProtKB"/>
</dbReference>
<dbReference type="GO" id="GO:0005634">
    <property type="term" value="C:nucleus"/>
    <property type="evidence" value="ECO:0007669"/>
    <property type="project" value="UniProtKB-SubCell"/>
</dbReference>
<dbReference type="GO" id="GO:0032991">
    <property type="term" value="C:protein-containing complex"/>
    <property type="evidence" value="ECO:0000314"/>
    <property type="project" value="UniProtKB"/>
</dbReference>
<dbReference type="GO" id="GO:0016929">
    <property type="term" value="F:deSUMOylase activity"/>
    <property type="evidence" value="ECO:0007669"/>
    <property type="project" value="Ensembl"/>
</dbReference>
<dbReference type="GO" id="GO:0042802">
    <property type="term" value="F:identical protein binding"/>
    <property type="evidence" value="ECO:0007669"/>
    <property type="project" value="Ensembl"/>
</dbReference>
<dbReference type="GO" id="GO:0061676">
    <property type="term" value="F:importin-alpha family protein binding"/>
    <property type="evidence" value="ECO:0000353"/>
    <property type="project" value="UniProtKB"/>
</dbReference>
<dbReference type="GO" id="GO:0052816">
    <property type="term" value="F:long-chain fatty acyl-CoA hydrolase activity"/>
    <property type="evidence" value="ECO:0000314"/>
    <property type="project" value="UniProtKB"/>
</dbReference>
<dbReference type="GO" id="GO:0008474">
    <property type="term" value="F:palmitoyl-(protein) hydrolase activity"/>
    <property type="evidence" value="ECO:0007669"/>
    <property type="project" value="RHEA"/>
</dbReference>
<dbReference type="GO" id="GO:0016926">
    <property type="term" value="P:protein desumoylation"/>
    <property type="evidence" value="ECO:0007669"/>
    <property type="project" value="Ensembl"/>
</dbReference>
<dbReference type="GO" id="GO:0006611">
    <property type="term" value="P:protein export from nucleus"/>
    <property type="evidence" value="ECO:0000353"/>
    <property type="project" value="UniProtKB"/>
</dbReference>
<dbReference type="GO" id="GO:0006508">
    <property type="term" value="P:proteolysis"/>
    <property type="evidence" value="ECO:0007669"/>
    <property type="project" value="UniProtKB-KW"/>
</dbReference>
<dbReference type="GO" id="GO:0032434">
    <property type="term" value="P:regulation of proteasomal ubiquitin-dependent protein catabolic process"/>
    <property type="evidence" value="ECO:0000314"/>
    <property type="project" value="UniProtKB"/>
</dbReference>
<dbReference type="FunFam" id="3.90.1720.30:FF:000002">
    <property type="entry name" value="Desumoylating isopeptidase 1"/>
    <property type="match status" value="1"/>
</dbReference>
<dbReference type="Gene3D" id="3.90.1720.30">
    <property type="entry name" value="PPPDE domains"/>
    <property type="match status" value="1"/>
</dbReference>
<dbReference type="InterPro" id="IPR008580">
    <property type="entry name" value="PPPDE_dom"/>
</dbReference>
<dbReference type="InterPro" id="IPR042266">
    <property type="entry name" value="PPPDE_sf"/>
</dbReference>
<dbReference type="PANTHER" id="PTHR12378">
    <property type="entry name" value="DESUMOYLATING ISOPEPTIDASE"/>
    <property type="match status" value="1"/>
</dbReference>
<dbReference type="PANTHER" id="PTHR12378:SF7">
    <property type="entry name" value="DESUMOYLATING ISOPEPTIDASE 1"/>
    <property type="match status" value="1"/>
</dbReference>
<dbReference type="Pfam" id="PF05903">
    <property type="entry name" value="Peptidase_C97"/>
    <property type="match status" value="1"/>
</dbReference>
<dbReference type="SMART" id="SM01179">
    <property type="entry name" value="DUF862"/>
    <property type="match status" value="1"/>
</dbReference>
<dbReference type="PROSITE" id="PS51858">
    <property type="entry name" value="PPPDE"/>
    <property type="match status" value="1"/>
</dbReference>
<name>DESI1_HUMAN</name>
<feature type="chain" id="PRO_0000318150" description="Desumoylating isopeptidase 1">
    <location>
        <begin position="1"/>
        <end position="168"/>
    </location>
</feature>
<feature type="domain" description="PPPDE" evidence="2">
    <location>
        <begin position="7"/>
        <end position="149"/>
    </location>
</feature>
<feature type="short sequence motif" description="Nuclear export signal 1" evidence="3">
    <location>
        <begin position="83"/>
        <end position="91"/>
    </location>
</feature>
<feature type="short sequence motif" description="Nuclear export signal 2" evidence="3">
    <location>
        <begin position="139"/>
        <end position="153"/>
    </location>
</feature>
<feature type="active site" evidence="2">
    <location>
        <position position="38"/>
    </location>
</feature>
<feature type="active site" evidence="2">
    <location>
        <position position="108"/>
    </location>
</feature>
<feature type="strand" evidence="9">
    <location>
        <begin position="7"/>
        <end position="15"/>
    </location>
</feature>
<feature type="turn" evidence="9">
    <location>
        <begin position="16"/>
        <end position="19"/>
    </location>
</feature>
<feature type="helix" evidence="9">
    <location>
        <begin position="20"/>
        <end position="29"/>
    </location>
</feature>
<feature type="strand" evidence="9">
    <location>
        <begin position="37"/>
        <end position="43"/>
    </location>
</feature>
<feature type="strand" evidence="9">
    <location>
        <begin position="46"/>
        <end position="49"/>
    </location>
</feature>
<feature type="strand" evidence="9">
    <location>
        <begin position="55"/>
        <end position="59"/>
    </location>
</feature>
<feature type="strand" evidence="9">
    <location>
        <begin position="69"/>
        <end position="77"/>
    </location>
</feature>
<feature type="helix" evidence="9">
    <location>
        <begin position="81"/>
        <end position="92"/>
    </location>
</feature>
<feature type="turn" evidence="9">
    <location>
        <begin position="93"/>
        <end position="95"/>
    </location>
</feature>
<feature type="helix" evidence="9">
    <location>
        <begin position="98"/>
        <end position="100"/>
    </location>
</feature>
<feature type="turn" evidence="9">
    <location>
        <begin position="103"/>
        <end position="105"/>
    </location>
</feature>
<feature type="helix" evidence="9">
    <location>
        <begin position="108"/>
        <end position="120"/>
    </location>
</feature>
<feature type="helix" evidence="9">
    <location>
        <begin position="126"/>
        <end position="129"/>
    </location>
</feature>
<feature type="helix" evidence="9">
    <location>
        <begin position="131"/>
        <end position="136"/>
    </location>
</feature>
<feature type="helix" evidence="9">
    <location>
        <begin position="139"/>
        <end position="144"/>
    </location>
</feature>
<feature type="turn" evidence="9">
    <location>
        <begin position="145"/>
        <end position="147"/>
    </location>
</feature>
<comment type="function">
    <text evidence="1 3 4">Protease which deconjugates SUMO1, SUMO2 and SUMO3 from some substrate proteins. Has isopeptidase but not SUMO-processing activity (By similarity). Desumoylates ZBTB46 (By similarity). Collaborates with UBQLN4 in the export of ubiquitinated proteins from the nucleus to the cytoplasm (PubMed:29666234). Exhibits palmitoyl protein thioesterase (S-depalmitoylation) activity towards synthetic substrates 4-methylumbelliferyl-6-S-palmitoyl-beta-D-glucopyranoside and S-depalmitoylation probe 5 (DPP-5) (PubMed:35427157).</text>
</comment>
<comment type="catalytic activity">
    <reaction evidence="4">
        <text>S-hexadecanoyl-L-cysteinyl-[protein] + H2O = L-cysteinyl-[protein] + hexadecanoate + H(+)</text>
        <dbReference type="Rhea" id="RHEA:19233"/>
        <dbReference type="Rhea" id="RHEA-COMP:10131"/>
        <dbReference type="Rhea" id="RHEA-COMP:11032"/>
        <dbReference type="ChEBI" id="CHEBI:7896"/>
        <dbReference type="ChEBI" id="CHEBI:15377"/>
        <dbReference type="ChEBI" id="CHEBI:15378"/>
        <dbReference type="ChEBI" id="CHEBI:29950"/>
        <dbReference type="ChEBI" id="CHEBI:74151"/>
        <dbReference type="EC" id="3.1.2.22"/>
    </reaction>
    <physiologicalReaction direction="left-to-right" evidence="7">
        <dbReference type="Rhea" id="RHEA:19234"/>
    </physiologicalReaction>
</comment>
<comment type="activity regulation">
    <text evidence="4">Palmostatin B inhibits its palmitoyl protein thioesterase activity.</text>
</comment>
<comment type="subunit">
    <text evidence="1 3">Homodimer (By similarity). Interacts with UBQLN4; leading to the export of UBQLN4 from the nucleus (PubMed:29666234).</text>
</comment>
<comment type="interaction">
    <interactant intactId="EBI-2806959">
        <id>Q6ICB0</id>
    </interactant>
    <interactant intactId="EBI-742038">
        <id>Q9P2A4</id>
        <label>ABI3</label>
    </interactant>
    <organismsDiffer>false</organismsDiffer>
    <experiments>3</experiments>
</comment>
<comment type="interaction">
    <interactant intactId="EBI-2806959">
        <id>Q6ICB0</id>
    </interactant>
    <interactant intactId="EBI-3925742">
        <id>Q8TD06</id>
        <label>AGR3</label>
    </interactant>
    <organismsDiffer>false</organismsDiffer>
    <experiments>3</experiments>
</comment>
<comment type="interaction">
    <interactant intactId="EBI-2806959">
        <id>Q6ICB0</id>
    </interactant>
    <interactant intactId="EBI-2876678">
        <id>Q9H305</id>
        <label>CDIP1</label>
    </interactant>
    <organismsDiffer>false</organismsDiffer>
    <experiments>4</experiments>
</comment>
<comment type="interaction">
    <interactant intactId="EBI-2806959">
        <id>Q6ICB0</id>
    </interactant>
    <interactant intactId="EBI-1188472">
        <id>P78358</id>
        <label>CTAG1B</label>
    </interactant>
    <organismsDiffer>false</organismsDiffer>
    <experiments>3</experiments>
</comment>
<comment type="interaction">
    <interactant intactId="EBI-2806959">
        <id>Q6ICB0</id>
    </interactant>
    <interactant intactId="EBI-12265122">
        <id>O75638-2</id>
        <label>CTAG2</label>
    </interactant>
    <organismsDiffer>false</organismsDiffer>
    <experiments>6</experiments>
</comment>
<comment type="interaction">
    <interactant intactId="EBI-2806959">
        <id>Q6ICB0</id>
    </interactant>
    <interactant intactId="EBI-724310">
        <id>Q15038</id>
        <label>DAZAP2</label>
    </interactant>
    <organismsDiffer>false</organismsDiffer>
    <experiments>5</experiments>
</comment>
<comment type="interaction">
    <interactant intactId="EBI-2806959">
        <id>Q6ICB0</id>
    </interactant>
    <interactant intactId="EBI-946830">
        <id>P30040</id>
        <label>ERP29</label>
    </interactant>
    <organismsDiffer>false</organismsDiffer>
    <experiments>3</experiments>
</comment>
<comment type="interaction">
    <interactant intactId="EBI-2806959">
        <id>Q6ICB0</id>
    </interactant>
    <interactant intactId="EBI-17640610">
        <id>P34910-2</id>
        <label>EVI2B</label>
    </interactant>
    <organismsDiffer>false</organismsDiffer>
    <experiments>3</experiments>
</comment>
<comment type="interaction">
    <interactant intactId="EBI-2806959">
        <id>Q6ICB0</id>
    </interactant>
    <interactant intactId="EBI-712073">
        <id>Q8NBJ4</id>
        <label>GOLM1</label>
    </interactant>
    <organismsDiffer>false</organismsDiffer>
    <experiments>3</experiments>
</comment>
<comment type="interaction">
    <interactant intactId="EBI-2806959">
        <id>Q6ICB0</id>
    </interactant>
    <interactant intactId="EBI-21690803">
        <id>Q4KN05</id>
        <label>KLRF1</label>
    </interactant>
    <organismsDiffer>false</organismsDiffer>
    <experiments>3</experiments>
</comment>
<comment type="interaction">
    <interactant intactId="EBI-2806959">
        <id>Q6ICB0</id>
    </interactant>
    <interactant intactId="EBI-16439278">
        <id>Q6FHY5</id>
        <label>MEOX2</label>
    </interactant>
    <organismsDiffer>false</organismsDiffer>
    <experiments>3</experiments>
</comment>
<comment type="interaction">
    <interactant intactId="EBI-2806959">
        <id>Q6ICB0</id>
    </interactant>
    <interactant intactId="EBI-713684">
        <id>Q13232</id>
        <label>NME3</label>
    </interactant>
    <organismsDiffer>false</organismsDiffer>
    <experiments>6</experiments>
</comment>
<comment type="interaction">
    <interactant intactId="EBI-2806959">
        <id>Q6ICB0</id>
    </interactant>
    <interactant intactId="EBI-3918356">
        <id>Q9H0P0</id>
        <label>NT5C3A</label>
    </interactant>
    <organismsDiffer>false</organismsDiffer>
    <experiments>5</experiments>
</comment>
<comment type="interaction">
    <interactant intactId="EBI-2806959">
        <id>Q6ICB0</id>
    </interactant>
    <interactant intactId="EBI-12944296">
        <id>P85299-2</id>
        <label>PRR5</label>
    </interactant>
    <organismsDiffer>false</organismsDiffer>
    <experiments>3</experiments>
</comment>
<comment type="interaction">
    <interactant intactId="EBI-2806959">
        <id>Q6ICB0</id>
    </interactant>
    <interactant intactId="EBI-2340927">
        <id>P78317</id>
        <label>RNF4</label>
    </interactant>
    <organismsDiffer>false</organismsDiffer>
    <experiments>3</experiments>
</comment>
<comment type="interaction">
    <interactant intactId="EBI-2806959">
        <id>Q6ICB0</id>
    </interactant>
    <interactant intactId="EBI-357375">
        <id>P62979</id>
        <label>RPS27A</label>
    </interactant>
    <organismsDiffer>false</organismsDiffer>
    <experiments>3</experiments>
</comment>
<comment type="interaction">
    <interactant intactId="EBI-2806959">
        <id>Q6ICB0</id>
    </interactant>
    <interactant intactId="EBI-18035902">
        <id>Q96DD7</id>
        <label>SHISA4</label>
    </interactant>
    <organismsDiffer>false</organismsDiffer>
    <experiments>3</experiments>
</comment>
<comment type="interaction">
    <interactant intactId="EBI-2806959">
        <id>Q6ICB0</id>
    </interactant>
    <interactant intactId="EBI-13369834">
        <id>Q8N114-3</id>
        <label>SHISA5</label>
    </interactant>
    <organismsDiffer>false</organismsDiffer>
    <experiments>3</experiments>
</comment>
<comment type="interaction">
    <interactant intactId="EBI-2806959">
        <id>Q6ICB0</id>
    </interactant>
    <interactant intactId="EBI-23836218">
        <id>Q3B7S5</id>
        <label>SMIM21</label>
    </interactant>
    <organismsDiffer>false</organismsDiffer>
    <experiments>3</experiments>
</comment>
<comment type="interaction">
    <interactant intactId="EBI-2806959">
        <id>Q6ICB0</id>
    </interactant>
    <interactant intactId="EBI-13344991">
        <id>P59536</id>
        <label>TAS2R41</label>
    </interactant>
    <organismsDiffer>false</organismsDiffer>
    <experiments>3</experiments>
</comment>
<comment type="interaction">
    <interactant intactId="EBI-2806959">
        <id>Q6ICB0</id>
    </interactant>
    <interactant intactId="EBI-357304">
        <id>P62987</id>
        <label>UBA52</label>
    </interactant>
    <organismsDiffer>false</organismsDiffer>
    <experiments>4</experiments>
</comment>
<comment type="interaction">
    <interactant intactId="EBI-2806959">
        <id>Q6ICB0</id>
    </interactant>
    <interactant intactId="EBI-413034">
        <id>P0CG47</id>
        <label>UBB</label>
    </interactant>
    <organismsDiffer>false</organismsDiffer>
    <experiments>3</experiments>
</comment>
<comment type="interaction">
    <interactant intactId="EBI-2806959">
        <id>Q6ICB0</id>
    </interactant>
    <interactant intactId="EBI-3390054">
        <id>P0CG48</id>
        <label>UBC</label>
    </interactant>
    <organismsDiffer>false</organismsDiffer>
    <experiments>3</experiments>
</comment>
<comment type="interaction">
    <interactant intactId="EBI-2806959">
        <id>Q6ICB0</id>
    </interactant>
    <interactant intactId="EBI-741480">
        <id>Q9UMX0</id>
        <label>UBQLN1</label>
    </interactant>
    <organismsDiffer>false</organismsDiffer>
    <experiments>6</experiments>
</comment>
<comment type="interaction">
    <interactant intactId="EBI-2806959">
        <id>Q6ICB0</id>
    </interactant>
    <interactant intactId="EBI-947187">
        <id>Q9UHD9</id>
        <label>UBQLN2</label>
    </interactant>
    <organismsDiffer>false</organismsDiffer>
    <experiments>5</experiments>
</comment>
<comment type="interaction">
    <interactant intactId="EBI-2806959">
        <id>Q6ICB0</id>
    </interactant>
    <interactant intactId="EBI-12295223">
        <id>Q8IYU4</id>
        <label>UBQLNL</label>
    </interactant>
    <organismsDiffer>false</organismsDiffer>
    <experiments>6</experiments>
</comment>
<comment type="interaction">
    <interactant intactId="EBI-2806959">
        <id>Q6ICB0</id>
    </interactant>
    <interactant intactId="EBI-12878912">
        <id>Q96PU4-2</id>
        <label>UHRF2</label>
    </interactant>
    <organismsDiffer>false</organismsDiffer>
    <experiments>3</experiments>
</comment>
<comment type="interaction">
    <interactant intactId="EBI-2806959">
        <id>Q6ICB0</id>
    </interactant>
    <interactant intactId="EBI-17234977">
        <id>A0A1U9X8X8</id>
    </interactant>
    <organismsDiffer>false</organismsDiffer>
    <experiments>3</experiments>
</comment>
<comment type="subcellular location">
    <subcellularLocation>
        <location evidence="3">Cytoplasm</location>
    </subcellularLocation>
    <subcellularLocation>
        <location evidence="3">Nucleus</location>
    </subcellularLocation>
    <text evidence="3">Shuttles between the nucleus and the cytoplasm; exported from the nucleus in a XPO1/CRM1-dependent manner via its nuclear export signal motifs.</text>
</comment>
<comment type="similarity">
    <text evidence="6">Belongs to the DeSI family.</text>
</comment>
<organism>
    <name type="scientific">Homo sapiens</name>
    <name type="common">Human</name>
    <dbReference type="NCBI Taxonomy" id="9606"/>
    <lineage>
        <taxon>Eukaryota</taxon>
        <taxon>Metazoa</taxon>
        <taxon>Chordata</taxon>
        <taxon>Craniata</taxon>
        <taxon>Vertebrata</taxon>
        <taxon>Euteleostomi</taxon>
        <taxon>Mammalia</taxon>
        <taxon>Eutheria</taxon>
        <taxon>Euarchontoglires</taxon>
        <taxon>Primates</taxon>
        <taxon>Haplorrhini</taxon>
        <taxon>Catarrhini</taxon>
        <taxon>Hominidae</taxon>
        <taxon>Homo</taxon>
    </lineage>
</organism>
<accession>Q6ICB0</accession>
<evidence type="ECO:0000250" key="1">
    <source>
        <dbReference type="UniProtKB" id="Q9CQT7"/>
    </source>
</evidence>
<evidence type="ECO:0000255" key="2">
    <source>
        <dbReference type="PROSITE-ProRule" id="PRU01205"/>
    </source>
</evidence>
<evidence type="ECO:0000269" key="3">
    <source>
    </source>
</evidence>
<evidence type="ECO:0000269" key="4">
    <source>
    </source>
</evidence>
<evidence type="ECO:0000303" key="5">
    <source>
    </source>
</evidence>
<evidence type="ECO:0000305" key="6"/>
<evidence type="ECO:0000305" key="7">
    <source>
    </source>
</evidence>
<evidence type="ECO:0000312" key="8">
    <source>
        <dbReference type="HGNC" id="HGNC:24577"/>
    </source>
</evidence>
<evidence type="ECO:0007829" key="9">
    <source>
        <dbReference type="PDB" id="3EBQ"/>
    </source>
</evidence>
<reference key="1">
    <citation type="journal article" date="2004" name="Genome Biol.">
        <title>A genome annotation-driven approach to cloning the human ORFeome.</title>
        <authorList>
            <person name="Collins J.E."/>
            <person name="Wright C.L."/>
            <person name="Edwards C.A."/>
            <person name="Davis M.P."/>
            <person name="Grinham J.A."/>
            <person name="Cole C.G."/>
            <person name="Goward M.E."/>
            <person name="Aguado B."/>
            <person name="Mallya M."/>
            <person name="Mokrab Y."/>
            <person name="Huckle E.J."/>
            <person name="Beare D.M."/>
            <person name="Dunham I."/>
        </authorList>
    </citation>
    <scope>NUCLEOTIDE SEQUENCE [LARGE SCALE MRNA]</scope>
</reference>
<reference key="2">
    <citation type="journal article" date="1999" name="Nature">
        <title>The DNA sequence of human chromosome 22.</title>
        <authorList>
            <person name="Dunham I."/>
            <person name="Hunt A.R."/>
            <person name="Collins J.E."/>
            <person name="Bruskiewich R."/>
            <person name="Beare D.M."/>
            <person name="Clamp M."/>
            <person name="Smink L.J."/>
            <person name="Ainscough R."/>
            <person name="Almeida J.P."/>
            <person name="Babbage A.K."/>
            <person name="Bagguley C."/>
            <person name="Bailey J."/>
            <person name="Barlow K.F."/>
            <person name="Bates K.N."/>
            <person name="Beasley O.P."/>
            <person name="Bird C.P."/>
            <person name="Blakey S.E."/>
            <person name="Bridgeman A.M."/>
            <person name="Buck D."/>
            <person name="Burgess J."/>
            <person name="Burrill W.D."/>
            <person name="Burton J."/>
            <person name="Carder C."/>
            <person name="Carter N.P."/>
            <person name="Chen Y."/>
            <person name="Clark G."/>
            <person name="Clegg S.M."/>
            <person name="Cobley V.E."/>
            <person name="Cole C.G."/>
            <person name="Collier R.E."/>
            <person name="Connor R."/>
            <person name="Conroy D."/>
            <person name="Corby N.R."/>
            <person name="Coville G.J."/>
            <person name="Cox A.V."/>
            <person name="Davis J."/>
            <person name="Dawson E."/>
            <person name="Dhami P.D."/>
            <person name="Dockree C."/>
            <person name="Dodsworth S.J."/>
            <person name="Durbin R.M."/>
            <person name="Ellington A.G."/>
            <person name="Evans K.L."/>
            <person name="Fey J.M."/>
            <person name="Fleming K."/>
            <person name="French L."/>
            <person name="Garner A.A."/>
            <person name="Gilbert J.G.R."/>
            <person name="Goward M.E."/>
            <person name="Grafham D.V."/>
            <person name="Griffiths M.N.D."/>
            <person name="Hall C."/>
            <person name="Hall R.E."/>
            <person name="Hall-Tamlyn G."/>
            <person name="Heathcott R.W."/>
            <person name="Ho S."/>
            <person name="Holmes S."/>
            <person name="Hunt S.E."/>
            <person name="Jones M.C."/>
            <person name="Kershaw J."/>
            <person name="Kimberley A.M."/>
            <person name="King A."/>
            <person name="Laird G.K."/>
            <person name="Langford C.F."/>
            <person name="Leversha M.A."/>
            <person name="Lloyd C."/>
            <person name="Lloyd D.M."/>
            <person name="Martyn I.D."/>
            <person name="Mashreghi-Mohammadi M."/>
            <person name="Matthews L.H."/>
            <person name="Mccann O.T."/>
            <person name="Mcclay J."/>
            <person name="Mclaren S."/>
            <person name="McMurray A.A."/>
            <person name="Milne S.A."/>
            <person name="Mortimore B.J."/>
            <person name="Odell C.N."/>
            <person name="Pavitt R."/>
            <person name="Pearce A.V."/>
            <person name="Pearson D."/>
            <person name="Phillimore B.J.C.T."/>
            <person name="Phillips S.H."/>
            <person name="Plumb R.W."/>
            <person name="Ramsay H."/>
            <person name="Ramsey Y."/>
            <person name="Rogers L."/>
            <person name="Ross M.T."/>
            <person name="Scott C.E."/>
            <person name="Sehra H.K."/>
            <person name="Skuce C.D."/>
            <person name="Smalley S."/>
            <person name="Smith M.L."/>
            <person name="Soderlund C."/>
            <person name="Spragon L."/>
            <person name="Steward C.A."/>
            <person name="Sulston J.E."/>
            <person name="Swann R.M."/>
            <person name="Vaudin M."/>
            <person name="Wall M."/>
            <person name="Wallis J.M."/>
            <person name="Whiteley M.N."/>
            <person name="Willey D.L."/>
            <person name="Williams L."/>
            <person name="Williams S.A."/>
            <person name="Williamson H."/>
            <person name="Wilmer T.E."/>
            <person name="Wilming L."/>
            <person name="Wright C.L."/>
            <person name="Hubbard T."/>
            <person name="Bentley D.R."/>
            <person name="Beck S."/>
            <person name="Rogers J."/>
            <person name="Shimizu N."/>
            <person name="Minoshima S."/>
            <person name="Kawasaki K."/>
            <person name="Sasaki T."/>
            <person name="Asakawa S."/>
            <person name="Kudoh J."/>
            <person name="Shintani A."/>
            <person name="Shibuya K."/>
            <person name="Yoshizaki Y."/>
            <person name="Aoki N."/>
            <person name="Mitsuyama S."/>
            <person name="Roe B.A."/>
            <person name="Chen F."/>
            <person name="Chu L."/>
            <person name="Crabtree J."/>
            <person name="Deschamps S."/>
            <person name="Do A."/>
            <person name="Do T."/>
            <person name="Dorman A."/>
            <person name="Fang F."/>
            <person name="Fu Y."/>
            <person name="Hu P."/>
            <person name="Hua A."/>
            <person name="Kenton S."/>
            <person name="Lai H."/>
            <person name="Lao H.I."/>
            <person name="Lewis J."/>
            <person name="Lewis S."/>
            <person name="Lin S.-P."/>
            <person name="Loh P."/>
            <person name="Malaj E."/>
            <person name="Nguyen T."/>
            <person name="Pan H."/>
            <person name="Phan S."/>
            <person name="Qi S."/>
            <person name="Qian Y."/>
            <person name="Ray L."/>
            <person name="Ren Q."/>
            <person name="Shaull S."/>
            <person name="Sloan D."/>
            <person name="Song L."/>
            <person name="Wang Q."/>
            <person name="Wang Y."/>
            <person name="Wang Z."/>
            <person name="White J."/>
            <person name="Willingham D."/>
            <person name="Wu H."/>
            <person name="Yao Z."/>
            <person name="Zhan M."/>
            <person name="Zhang G."/>
            <person name="Chissoe S."/>
            <person name="Murray J."/>
            <person name="Miller N."/>
            <person name="Minx P."/>
            <person name="Fulton R."/>
            <person name="Johnson D."/>
            <person name="Bemis G."/>
            <person name="Bentley D."/>
            <person name="Bradshaw H."/>
            <person name="Bourne S."/>
            <person name="Cordes M."/>
            <person name="Du Z."/>
            <person name="Fulton L."/>
            <person name="Goela D."/>
            <person name="Graves T."/>
            <person name="Hawkins J."/>
            <person name="Hinds K."/>
            <person name="Kemp K."/>
            <person name="Latreille P."/>
            <person name="Layman D."/>
            <person name="Ozersky P."/>
            <person name="Rohlfing T."/>
            <person name="Scheet P."/>
            <person name="Walker C."/>
            <person name="Wamsley A."/>
            <person name="Wohldmann P."/>
            <person name="Pepin K."/>
            <person name="Nelson J."/>
            <person name="Korf I."/>
            <person name="Bedell J.A."/>
            <person name="Hillier L.W."/>
            <person name="Mardis E."/>
            <person name="Waterston R."/>
            <person name="Wilson R."/>
            <person name="Emanuel B.S."/>
            <person name="Shaikh T."/>
            <person name="Kurahashi H."/>
            <person name="Saitta S."/>
            <person name="Budarf M.L."/>
            <person name="McDermid H.E."/>
            <person name="Johnson A."/>
            <person name="Wong A.C.C."/>
            <person name="Morrow B.E."/>
            <person name="Edelmann L."/>
            <person name="Kim U.J."/>
            <person name="Shizuya H."/>
            <person name="Simon M.I."/>
            <person name="Dumanski J.P."/>
            <person name="Peyrard M."/>
            <person name="Kedra D."/>
            <person name="Seroussi E."/>
            <person name="Fransson I."/>
            <person name="Tapia I."/>
            <person name="Bruder C.E."/>
            <person name="O'Brien K.P."/>
            <person name="Wilkinson P."/>
            <person name="Bodenteich A."/>
            <person name="Hartman K."/>
            <person name="Hu X."/>
            <person name="Khan A.S."/>
            <person name="Lane L."/>
            <person name="Tilahun Y."/>
            <person name="Wright H."/>
        </authorList>
    </citation>
    <scope>NUCLEOTIDE SEQUENCE [LARGE SCALE GENOMIC DNA]</scope>
</reference>
<reference key="3">
    <citation type="submission" date="2005-07" db="EMBL/GenBank/DDBJ databases">
        <authorList>
            <person name="Mural R.J."/>
            <person name="Istrail S."/>
            <person name="Sutton G.G."/>
            <person name="Florea L."/>
            <person name="Halpern A.L."/>
            <person name="Mobarry C.M."/>
            <person name="Lippert R."/>
            <person name="Walenz B."/>
            <person name="Shatkay H."/>
            <person name="Dew I."/>
            <person name="Miller J.R."/>
            <person name="Flanigan M.J."/>
            <person name="Edwards N.J."/>
            <person name="Bolanos R."/>
            <person name="Fasulo D."/>
            <person name="Halldorsson B.V."/>
            <person name="Hannenhalli S."/>
            <person name="Turner R."/>
            <person name="Yooseph S."/>
            <person name="Lu F."/>
            <person name="Nusskern D.R."/>
            <person name="Shue B.C."/>
            <person name="Zheng X.H."/>
            <person name="Zhong F."/>
            <person name="Delcher A.L."/>
            <person name="Huson D.H."/>
            <person name="Kravitz S.A."/>
            <person name="Mouchard L."/>
            <person name="Reinert K."/>
            <person name="Remington K.A."/>
            <person name="Clark A.G."/>
            <person name="Waterman M.S."/>
            <person name="Eichler E.E."/>
            <person name="Adams M.D."/>
            <person name="Hunkapiller M.W."/>
            <person name="Myers E.W."/>
            <person name="Venter J.C."/>
        </authorList>
    </citation>
    <scope>NUCLEOTIDE SEQUENCE [LARGE SCALE GENOMIC DNA]</scope>
</reference>
<reference key="4">
    <citation type="journal article" date="2004" name="Genome Res.">
        <title>The status, quality, and expansion of the NIH full-length cDNA project: the Mammalian Gene Collection (MGC).</title>
        <authorList>
            <consortium name="The MGC Project Team"/>
        </authorList>
    </citation>
    <scope>NUCLEOTIDE SEQUENCE [LARGE SCALE MRNA]</scope>
    <source>
        <tissue>Brain</tissue>
    </source>
</reference>
<reference key="5">
    <citation type="journal article" date="2008" name="Proc. Natl. Acad. Sci. U.S.A.">
        <title>A quantitative atlas of mitotic phosphorylation.</title>
        <authorList>
            <person name="Dephoure N."/>
            <person name="Zhou C."/>
            <person name="Villen J."/>
            <person name="Beausoleil S.A."/>
            <person name="Bakalarski C.E."/>
            <person name="Elledge S.J."/>
            <person name="Gygi S.P."/>
        </authorList>
    </citation>
    <scope>IDENTIFICATION BY MASS SPECTROMETRY [LARGE SCALE ANALYSIS]</scope>
    <source>
        <tissue>Cervix carcinoma</tissue>
    </source>
</reference>
<reference key="6">
    <citation type="journal article" date="2011" name="BMC Syst. Biol.">
        <title>Initial characterization of the human central proteome.</title>
        <authorList>
            <person name="Burkard T.R."/>
            <person name="Planyavsky M."/>
            <person name="Kaupe I."/>
            <person name="Breitwieser F.P."/>
            <person name="Buerckstuemmer T."/>
            <person name="Bennett K.L."/>
            <person name="Superti-Furga G."/>
            <person name="Colinge J."/>
        </authorList>
    </citation>
    <scope>IDENTIFICATION BY MASS SPECTROMETRY [LARGE SCALE ANALYSIS]</scope>
</reference>
<reference key="7">
    <citation type="journal article" date="2018" name="Proc. Natl. Acad. Sci. U.S.A.">
        <title>Nuclear export of ubiquitinated proteins via the UBIN-POST system.</title>
        <authorList>
            <person name="Hirayama S."/>
            <person name="Sugihara M."/>
            <person name="Morito D."/>
            <person name="Iemura S.I."/>
            <person name="Natsume T."/>
            <person name="Murata S."/>
            <person name="Nagata K."/>
        </authorList>
    </citation>
    <scope>FUNCTION</scope>
    <scope>SUBCELLULAR LOCATION</scope>
    <scope>INTERACTION WITH UBQLN4</scope>
</reference>
<reference key="8">
    <citation type="journal article" date="2022" name="Sci. Adv.">
        <title>Cln5 represents a new type of cysteine-based S-depalmitoylase linked to neurodegeneration.</title>
        <authorList>
            <person name="Luebben A.V."/>
            <person name="Bender D."/>
            <person name="Becker S."/>
            <person name="Crowther L.M."/>
            <person name="Erven I."/>
            <person name="Hofmann K."/>
            <person name="Soeding J."/>
            <person name="Klemp H."/>
            <person name="Bellotti C."/>
            <person name="Staeuble A."/>
            <person name="Qiu T."/>
            <person name="Kathayat R.S."/>
            <person name="Dickinson B.C."/>
            <person name="Gaertner J."/>
            <person name="Sheldrick G.M."/>
            <person name="Kraetzner R."/>
            <person name="Steinfeld R."/>
        </authorList>
    </citation>
    <scope>FUNCTION</scope>
    <scope>CATALYTIC ACTIVITY</scope>
    <scope>ACTIVITY REGULATION</scope>
</reference>
<reference key="9">
    <citation type="submission" date="2009-02" db="PDB data bank">
        <title>Structure of human PPPDE1.</title>
        <authorList>
            <consortium name="Structural genomics consortium (SGC)"/>
        </authorList>
    </citation>
    <scope>X-RAY CRYSTALLOGRAPHY (1.9 ANGSTROMS)</scope>
</reference>
<protein>
    <recommendedName>
        <fullName evidence="1">Desumoylating isopeptidase 1</fullName>
        <shortName evidence="1">DeSI-1</shortName>
        <ecNumber evidence="1">3.4.-.-</ecNumber>
    </recommendedName>
    <alternativeName>
        <fullName evidence="6">PPPDE peptidase domain-containing protein 2</fullName>
    </alternativeName>
    <alternativeName>
        <fullName>Palmitoyl protein thioesterase DESI1</fullName>
        <ecNumber evidence="4">3.1.2.22</ecNumber>
    </alternativeName>
    <alternativeName>
        <fullName evidence="5">Polyubiquitinated substrate transporter</fullName>
        <shortName evidence="5">POST</shortName>
    </alternativeName>
    <alternativeName>
        <fullName>S-depalmitoylase DESI1</fullName>
    </alternativeName>
</protein>
<gene>
    <name evidence="8" type="primary">DESI1</name>
    <name evidence="8" type="synonym">FAM152B</name>
    <name evidence="8" type="synonym">PPPDE2</name>
</gene>
<proteinExistence type="evidence at protein level"/>
<keyword id="KW-0002">3D-structure</keyword>
<keyword id="KW-0963">Cytoplasm</keyword>
<keyword id="KW-0378">Hydrolase</keyword>
<keyword id="KW-0539">Nucleus</keyword>
<keyword id="KW-0645">Protease</keyword>
<keyword id="KW-1267">Proteomics identification</keyword>
<keyword id="KW-1185">Reference proteome</keyword>